<evidence type="ECO:0000250" key="1">
    <source>
        <dbReference type="UniProtKB" id="O07855"/>
    </source>
</evidence>
<evidence type="ECO:0000255" key="2"/>
<evidence type="ECO:0000305" key="3"/>
<dbReference type="EC" id="1.3.8.-" evidence="1"/>
<dbReference type="EMBL" id="AJ938182">
    <property type="protein sequence ID" value="CAI82122.1"/>
    <property type="molecule type" value="Genomic_DNA"/>
</dbReference>
<dbReference type="RefSeq" id="WP_000686193.1">
    <property type="nucleotide sequence ID" value="NC_007622.1"/>
</dbReference>
<dbReference type="SMR" id="Q2YWE8"/>
<dbReference type="KEGG" id="sab:SAB2434c"/>
<dbReference type="HOGENOM" id="CLU_019722_2_1_9"/>
<dbReference type="UniPathway" id="UPA00029">
    <property type="reaction ID" value="UER00557"/>
</dbReference>
<dbReference type="GO" id="GO:0102223">
    <property type="term" value="F:4,4'-diapophytoene desaturase (4,4'-diaponeurosporene-forming)"/>
    <property type="evidence" value="ECO:0007669"/>
    <property type="project" value="RHEA"/>
</dbReference>
<dbReference type="GO" id="GO:0016117">
    <property type="term" value="P:carotenoid biosynthetic process"/>
    <property type="evidence" value="ECO:0007669"/>
    <property type="project" value="UniProtKB-KW"/>
</dbReference>
<dbReference type="Gene3D" id="3.50.50.60">
    <property type="entry name" value="FAD/NAD(P)-binding domain"/>
    <property type="match status" value="2"/>
</dbReference>
<dbReference type="InterPro" id="IPR002937">
    <property type="entry name" value="Amino_oxidase"/>
</dbReference>
<dbReference type="InterPro" id="IPR014105">
    <property type="entry name" value="Carotenoid/retinoid_OxRdtase"/>
</dbReference>
<dbReference type="InterPro" id="IPR036188">
    <property type="entry name" value="FAD/NAD-bd_sf"/>
</dbReference>
<dbReference type="NCBIfam" id="TIGR02734">
    <property type="entry name" value="crtI_fam"/>
    <property type="match status" value="1"/>
</dbReference>
<dbReference type="PANTHER" id="PTHR43734">
    <property type="entry name" value="PHYTOENE DESATURASE"/>
    <property type="match status" value="1"/>
</dbReference>
<dbReference type="PANTHER" id="PTHR43734:SF1">
    <property type="entry name" value="PHYTOENE DESATURASE"/>
    <property type="match status" value="1"/>
</dbReference>
<dbReference type="Pfam" id="PF01593">
    <property type="entry name" value="Amino_oxidase"/>
    <property type="match status" value="1"/>
</dbReference>
<dbReference type="PRINTS" id="PR00419">
    <property type="entry name" value="ADXRDTASE"/>
</dbReference>
<dbReference type="SUPFAM" id="SSF51905">
    <property type="entry name" value="FAD/NAD(P)-binding domain"/>
    <property type="match status" value="1"/>
</dbReference>
<feature type="chain" id="PRO_0000272192" description="4,4'-diapophytoene desaturase (4,4'-diaponeurosporene-forming)">
    <location>
        <begin position="1"/>
        <end position="502"/>
    </location>
</feature>
<feature type="binding site" evidence="2">
    <location>
        <begin position="5"/>
        <end position="17"/>
    </location>
    <ligand>
        <name>FAD</name>
        <dbReference type="ChEBI" id="CHEBI:57692"/>
    </ligand>
</feature>
<accession>Q2YWE8</accession>
<name>CRTN_STAAB</name>
<sequence>MKIAVIGAGVTGLAAAARIASQGHEVTIFEKNTNVGGRMNQLKKDGFTFDMGPTIVMMPDVYKDVFTMCGKNYEDYIELRQLRYIYDVYFDRDDRITVPTDLAELQHMLESIEPGSTHGFMSFLTDVYKKYEIARRYFLERTYRKPSDFYNMTSLVQGAKLKTLNHADQLIEHYIDNEKIQKLLAFQTLYIGIDPKRGPSLYSIIPMIEMMFGVHFIKGGMYGMAQGLAQLNKDLGVNIELNAEIEQIIIDPKFKRADAIKVNGDIRKFDKILCTADFPSVAESLMPDFAPIKKYPPHKIADLDYSCSAFLMYIGIDIDVTDQVRLHNVIFSDDFRGNIEEIFEGRLSYDPSIYVYVPAVADKSLAPEGKTGIYVLMPTPELKTGSGIDWSDEALTQQIKEIIYRKLATIEVFEDIKSHIVSETIFTPNDFEQTYHAKFGSAFGLMPTLAQSNYYRPQNVSRDYKDLYFAGASTHPGAGVPIVLTSAKITVDEMVKDIEQGV</sequence>
<proteinExistence type="inferred from homology"/>
<gene>
    <name evidence="1" type="primary">crtN</name>
    <name type="ordered locus">SAB2434c</name>
</gene>
<keyword id="KW-0125">Carotenoid biosynthesis</keyword>
<keyword id="KW-0274">FAD</keyword>
<keyword id="KW-0285">Flavoprotein</keyword>
<keyword id="KW-0560">Oxidoreductase</keyword>
<keyword id="KW-0843">Virulence</keyword>
<reference key="1">
    <citation type="journal article" date="2007" name="PLoS ONE">
        <title>Molecular correlates of host specialization in Staphylococcus aureus.</title>
        <authorList>
            <person name="Herron-Olson L."/>
            <person name="Fitzgerald J.R."/>
            <person name="Musser J.M."/>
            <person name="Kapur V."/>
        </authorList>
    </citation>
    <scope>NUCLEOTIDE SEQUENCE [LARGE SCALE GENOMIC DNA]</scope>
    <source>
        <strain>bovine RF122 / ET3-1</strain>
    </source>
</reference>
<comment type="function">
    <text evidence="1">Involved in the biosynthesis of the yellow-orange carotenoid staphyloxanthin, which plays a role in the virulence via its protective function against oxidative stress. Catalyzes three successive dehydrogenation reactions that lead to the introduction of three double bonds into 4,4'-diapophytoene (dehydrosqualene), with 4,4'-diapophytofluene and 4,4'-diapo-zeta-carotene as intermediates, and 4,4'-diaponeurosporene (the major deep-yellow pigment in staphylococci strains) as the end product.</text>
</comment>
<comment type="catalytic activity">
    <reaction evidence="1">
        <text>15-cis-4,4'-diapophytoene + 3 FAD + 3 H(+) = all-trans-4,4'-diaponeurosporene + 3 FADH2</text>
        <dbReference type="Rhea" id="RHEA:42800"/>
        <dbReference type="ChEBI" id="CHEBI:15378"/>
        <dbReference type="ChEBI" id="CHEBI:57692"/>
        <dbReference type="ChEBI" id="CHEBI:58307"/>
        <dbReference type="ChEBI" id="CHEBI:62738"/>
        <dbReference type="ChEBI" id="CHEBI:62743"/>
    </reaction>
</comment>
<comment type="pathway">
    <text evidence="1">Carotenoid biosynthesis; staphyloxanthin biosynthesis; staphyloxanthin from farnesyl diphosphate: step 2/5.</text>
</comment>
<comment type="similarity">
    <text evidence="3">Belongs to the carotenoid/retinoid oxidoreductase family. CrtN subfamily.</text>
</comment>
<protein>
    <recommendedName>
        <fullName evidence="1">4,4'-diapophytoene desaturase (4,4'-diaponeurosporene-forming)</fullName>
        <ecNumber evidence="1">1.3.8.-</ecNumber>
    </recommendedName>
    <alternativeName>
        <fullName evidence="1">Dehydrosqualene desaturase</fullName>
    </alternativeName>
</protein>
<organism>
    <name type="scientific">Staphylococcus aureus (strain bovine RF122 / ET3-1)</name>
    <dbReference type="NCBI Taxonomy" id="273036"/>
    <lineage>
        <taxon>Bacteria</taxon>
        <taxon>Bacillati</taxon>
        <taxon>Bacillota</taxon>
        <taxon>Bacilli</taxon>
        <taxon>Bacillales</taxon>
        <taxon>Staphylococcaceae</taxon>
        <taxon>Staphylococcus</taxon>
    </lineage>
</organism>